<proteinExistence type="evidence at protein level"/>
<accession>Q9SD12</accession>
<dbReference type="EC" id="3.1.3.16" evidence="3"/>
<dbReference type="EMBL" id="AL133452">
    <property type="protein sequence ID" value="CAB63001.1"/>
    <property type="molecule type" value="Genomic_DNA"/>
</dbReference>
<dbReference type="EMBL" id="CP002686">
    <property type="protein sequence ID" value="AEE78784.1"/>
    <property type="molecule type" value="Genomic_DNA"/>
</dbReference>
<dbReference type="EMBL" id="CP002686">
    <property type="protein sequence ID" value="AEE78785.1"/>
    <property type="molecule type" value="Genomic_DNA"/>
</dbReference>
<dbReference type="EMBL" id="CP002686">
    <property type="protein sequence ID" value="ANM65136.1"/>
    <property type="molecule type" value="Genomic_DNA"/>
</dbReference>
<dbReference type="EMBL" id="BX823319">
    <property type="status" value="NOT_ANNOTATED_CDS"/>
    <property type="molecule type" value="mRNA"/>
</dbReference>
<dbReference type="PIR" id="T45768">
    <property type="entry name" value="T45768"/>
</dbReference>
<dbReference type="RefSeq" id="NP_001327130.1">
    <molecule id="Q9SD12-1"/>
    <property type="nucleotide sequence ID" value="NM_001339513.1"/>
</dbReference>
<dbReference type="RefSeq" id="NP_566949.2">
    <molecule id="Q9SD12-1"/>
    <property type="nucleotide sequence ID" value="NM_114996.4"/>
</dbReference>
<dbReference type="RefSeq" id="NP_974411.1">
    <molecule id="Q9SD12-2"/>
    <property type="nucleotide sequence ID" value="NM_202682.2"/>
</dbReference>
<dbReference type="SMR" id="Q9SD12"/>
<dbReference type="BioGRID" id="9618">
    <property type="interactions" value="1"/>
</dbReference>
<dbReference type="FunCoup" id="Q9SD12">
    <property type="interactions" value="3608"/>
</dbReference>
<dbReference type="STRING" id="3702.Q9SD12"/>
<dbReference type="PaxDb" id="3702-AT3G51370.1"/>
<dbReference type="ProteomicsDB" id="248716">
    <molecule id="Q9SD12-1"/>
</dbReference>
<dbReference type="EnsemblPlants" id="AT3G51370.1">
    <molecule id="Q9SD12-1"/>
    <property type="protein sequence ID" value="AT3G51370.1"/>
    <property type="gene ID" value="AT3G51370"/>
</dbReference>
<dbReference type="EnsemblPlants" id="AT3G51370.2">
    <molecule id="Q9SD12-2"/>
    <property type="protein sequence ID" value="AT3G51370.2"/>
    <property type="gene ID" value="AT3G51370"/>
</dbReference>
<dbReference type="EnsemblPlants" id="AT3G51370.3">
    <molecule id="Q9SD12-1"/>
    <property type="protein sequence ID" value="AT3G51370.3"/>
    <property type="gene ID" value="AT3G51370"/>
</dbReference>
<dbReference type="GeneID" id="824300"/>
<dbReference type="Gramene" id="AT3G51370.1">
    <molecule id="Q9SD12-1"/>
    <property type="protein sequence ID" value="AT3G51370.1"/>
    <property type="gene ID" value="AT3G51370"/>
</dbReference>
<dbReference type="Gramene" id="AT3G51370.2">
    <molecule id="Q9SD12-2"/>
    <property type="protein sequence ID" value="AT3G51370.2"/>
    <property type="gene ID" value="AT3G51370"/>
</dbReference>
<dbReference type="Gramene" id="AT3G51370.3">
    <molecule id="Q9SD12-1"/>
    <property type="protein sequence ID" value="AT3G51370.3"/>
    <property type="gene ID" value="AT3G51370"/>
</dbReference>
<dbReference type="KEGG" id="ath:AT3G51370"/>
<dbReference type="Araport" id="AT3G51370"/>
<dbReference type="TAIR" id="AT3G51370">
    <property type="gene designation" value="PP2C.D6"/>
</dbReference>
<dbReference type="eggNOG" id="KOG0700">
    <property type="taxonomic scope" value="Eukaryota"/>
</dbReference>
<dbReference type="HOGENOM" id="CLU_013173_2_0_1"/>
<dbReference type="InParanoid" id="Q9SD12"/>
<dbReference type="OMA" id="LLWYNDI"/>
<dbReference type="PhylomeDB" id="Q9SD12"/>
<dbReference type="PRO" id="PR:Q9SD12"/>
<dbReference type="Proteomes" id="UP000006548">
    <property type="component" value="Chromosome 3"/>
</dbReference>
<dbReference type="ExpressionAtlas" id="Q9SD12">
    <property type="expression patterns" value="baseline and differential"/>
</dbReference>
<dbReference type="GO" id="GO:0046872">
    <property type="term" value="F:metal ion binding"/>
    <property type="evidence" value="ECO:0007669"/>
    <property type="project" value="UniProtKB-KW"/>
</dbReference>
<dbReference type="GO" id="GO:0004722">
    <property type="term" value="F:protein serine/threonine phosphatase activity"/>
    <property type="evidence" value="ECO:0007669"/>
    <property type="project" value="UniProtKB-EC"/>
</dbReference>
<dbReference type="CDD" id="cd00143">
    <property type="entry name" value="PP2Cc"/>
    <property type="match status" value="1"/>
</dbReference>
<dbReference type="FunFam" id="3.60.40.10:FF:000008">
    <property type="entry name" value="Phosphatase 2C family protein"/>
    <property type="match status" value="1"/>
</dbReference>
<dbReference type="Gene3D" id="3.60.40.10">
    <property type="entry name" value="PPM-type phosphatase domain"/>
    <property type="match status" value="1"/>
</dbReference>
<dbReference type="InterPro" id="IPR015655">
    <property type="entry name" value="PP2C"/>
</dbReference>
<dbReference type="InterPro" id="IPR000222">
    <property type="entry name" value="PP2C_BS"/>
</dbReference>
<dbReference type="InterPro" id="IPR036457">
    <property type="entry name" value="PPM-type-like_dom_sf"/>
</dbReference>
<dbReference type="InterPro" id="IPR001932">
    <property type="entry name" value="PPM-type_phosphatase-like_dom"/>
</dbReference>
<dbReference type="PANTHER" id="PTHR47992">
    <property type="entry name" value="PROTEIN PHOSPHATASE"/>
    <property type="match status" value="1"/>
</dbReference>
<dbReference type="Pfam" id="PF00481">
    <property type="entry name" value="PP2C"/>
    <property type="match status" value="1"/>
</dbReference>
<dbReference type="SMART" id="SM00332">
    <property type="entry name" value="PP2Cc"/>
    <property type="match status" value="1"/>
</dbReference>
<dbReference type="SUPFAM" id="SSF81606">
    <property type="entry name" value="PP2C-like"/>
    <property type="match status" value="1"/>
</dbReference>
<dbReference type="PROSITE" id="PS01032">
    <property type="entry name" value="PPM_1"/>
    <property type="match status" value="1"/>
</dbReference>
<dbReference type="PROSITE" id="PS51746">
    <property type="entry name" value="PPM_2"/>
    <property type="match status" value="1"/>
</dbReference>
<name>P2C46_ARATH</name>
<comment type="function">
    <text evidence="2">May dephosphorylate and repress plasma membrane H(+)-ATPases (PM H(+)-ATPases, e.g. AHA1 and AHA2), thus influencing negatively plant growth and fitness.</text>
</comment>
<comment type="catalytic activity">
    <reaction evidence="3">
        <text>O-phospho-L-seryl-[protein] + H2O = L-seryl-[protein] + phosphate</text>
        <dbReference type="Rhea" id="RHEA:20629"/>
        <dbReference type="Rhea" id="RHEA-COMP:9863"/>
        <dbReference type="Rhea" id="RHEA-COMP:11604"/>
        <dbReference type="ChEBI" id="CHEBI:15377"/>
        <dbReference type="ChEBI" id="CHEBI:29999"/>
        <dbReference type="ChEBI" id="CHEBI:43474"/>
        <dbReference type="ChEBI" id="CHEBI:83421"/>
        <dbReference type="EC" id="3.1.3.16"/>
    </reaction>
</comment>
<comment type="catalytic activity">
    <reaction evidence="3">
        <text>O-phospho-L-threonyl-[protein] + H2O = L-threonyl-[protein] + phosphate</text>
        <dbReference type="Rhea" id="RHEA:47004"/>
        <dbReference type="Rhea" id="RHEA-COMP:11060"/>
        <dbReference type="Rhea" id="RHEA-COMP:11605"/>
        <dbReference type="ChEBI" id="CHEBI:15377"/>
        <dbReference type="ChEBI" id="CHEBI:30013"/>
        <dbReference type="ChEBI" id="CHEBI:43474"/>
        <dbReference type="ChEBI" id="CHEBI:61977"/>
        <dbReference type="EC" id="3.1.3.16"/>
    </reaction>
</comment>
<comment type="cofactor">
    <cofactor evidence="1">
        <name>Mg(2+)</name>
        <dbReference type="ChEBI" id="CHEBI:18420"/>
    </cofactor>
    <cofactor evidence="1">
        <name>Mn(2+)</name>
        <dbReference type="ChEBI" id="CHEBI:29035"/>
    </cofactor>
    <text evidence="1">Binds 2 magnesium or manganese ions per subunit.</text>
</comment>
<comment type="subunit">
    <text evidence="6">Interacts with SAUR19.</text>
</comment>
<comment type="alternative products">
    <event type="alternative splicing"/>
    <isoform>
        <id>Q9SD12-1</id>
        <name>1</name>
        <sequence type="displayed"/>
    </isoform>
    <isoform>
        <id>Q9SD12-2</id>
        <name>2</name>
        <sequence type="described" ref="VSP_036772 VSP_036773"/>
    </isoform>
</comment>
<comment type="similarity">
    <text evidence="9">Belongs to the PP2C family.</text>
</comment>
<comment type="sequence caution" evidence="9">
    <conflict type="miscellaneous discrepancy">
        <sequence resource="EMBL" id="BX823319"/>
    </conflict>
    <text>Sequencing errors.</text>
</comment>
<gene>
    <name evidence="7" type="primary">PP2C46</name>
    <name evidence="8" type="synonym">PP2C-D6</name>
    <name evidence="10" type="ordered locus">At3g51370</name>
    <name evidence="11" type="ORF">F26O13.10</name>
</gene>
<organism>
    <name type="scientific">Arabidopsis thaliana</name>
    <name type="common">Mouse-ear cress</name>
    <dbReference type="NCBI Taxonomy" id="3702"/>
    <lineage>
        <taxon>Eukaryota</taxon>
        <taxon>Viridiplantae</taxon>
        <taxon>Streptophyta</taxon>
        <taxon>Embryophyta</taxon>
        <taxon>Tracheophyta</taxon>
        <taxon>Spermatophyta</taxon>
        <taxon>Magnoliopsida</taxon>
        <taxon>eudicotyledons</taxon>
        <taxon>Gunneridae</taxon>
        <taxon>Pentapetalae</taxon>
        <taxon>rosids</taxon>
        <taxon>malvids</taxon>
        <taxon>Brassicales</taxon>
        <taxon>Brassicaceae</taxon>
        <taxon>Camelineae</taxon>
        <taxon>Arabidopsis</taxon>
    </lineage>
</organism>
<reference key="1">
    <citation type="journal article" date="2000" name="Nature">
        <title>Sequence and analysis of chromosome 3 of the plant Arabidopsis thaliana.</title>
        <authorList>
            <person name="Salanoubat M."/>
            <person name="Lemcke K."/>
            <person name="Rieger M."/>
            <person name="Ansorge W."/>
            <person name="Unseld M."/>
            <person name="Fartmann B."/>
            <person name="Valle G."/>
            <person name="Bloecker H."/>
            <person name="Perez-Alonso M."/>
            <person name="Obermaier B."/>
            <person name="Delseny M."/>
            <person name="Boutry M."/>
            <person name="Grivell L.A."/>
            <person name="Mache R."/>
            <person name="Puigdomenech P."/>
            <person name="De Simone V."/>
            <person name="Choisne N."/>
            <person name="Artiguenave F."/>
            <person name="Robert C."/>
            <person name="Brottier P."/>
            <person name="Wincker P."/>
            <person name="Cattolico L."/>
            <person name="Weissenbach J."/>
            <person name="Saurin W."/>
            <person name="Quetier F."/>
            <person name="Schaefer M."/>
            <person name="Mueller-Auer S."/>
            <person name="Gabel C."/>
            <person name="Fuchs M."/>
            <person name="Benes V."/>
            <person name="Wurmbach E."/>
            <person name="Drzonek H."/>
            <person name="Erfle H."/>
            <person name="Jordan N."/>
            <person name="Bangert S."/>
            <person name="Wiedelmann R."/>
            <person name="Kranz H."/>
            <person name="Voss H."/>
            <person name="Holland R."/>
            <person name="Brandt P."/>
            <person name="Nyakatura G."/>
            <person name="Vezzi A."/>
            <person name="D'Angelo M."/>
            <person name="Pallavicini A."/>
            <person name="Toppo S."/>
            <person name="Simionati B."/>
            <person name="Conrad A."/>
            <person name="Hornischer K."/>
            <person name="Kauer G."/>
            <person name="Loehnert T.-H."/>
            <person name="Nordsiek G."/>
            <person name="Reichelt J."/>
            <person name="Scharfe M."/>
            <person name="Schoen O."/>
            <person name="Bargues M."/>
            <person name="Terol J."/>
            <person name="Climent J."/>
            <person name="Navarro P."/>
            <person name="Collado C."/>
            <person name="Perez-Perez A."/>
            <person name="Ottenwaelder B."/>
            <person name="Duchemin D."/>
            <person name="Cooke R."/>
            <person name="Laudie M."/>
            <person name="Berger-Llauro C."/>
            <person name="Purnelle B."/>
            <person name="Masuy D."/>
            <person name="de Haan M."/>
            <person name="Maarse A.C."/>
            <person name="Alcaraz J.-P."/>
            <person name="Cottet A."/>
            <person name="Casacuberta E."/>
            <person name="Monfort A."/>
            <person name="Argiriou A."/>
            <person name="Flores M."/>
            <person name="Liguori R."/>
            <person name="Vitale D."/>
            <person name="Mannhaupt G."/>
            <person name="Haase D."/>
            <person name="Schoof H."/>
            <person name="Rudd S."/>
            <person name="Zaccaria P."/>
            <person name="Mewes H.-W."/>
            <person name="Mayer K.F.X."/>
            <person name="Kaul S."/>
            <person name="Town C.D."/>
            <person name="Koo H.L."/>
            <person name="Tallon L.J."/>
            <person name="Jenkins J."/>
            <person name="Rooney T."/>
            <person name="Rizzo M."/>
            <person name="Walts A."/>
            <person name="Utterback T."/>
            <person name="Fujii C.Y."/>
            <person name="Shea T.P."/>
            <person name="Creasy T.H."/>
            <person name="Haas B."/>
            <person name="Maiti R."/>
            <person name="Wu D."/>
            <person name="Peterson J."/>
            <person name="Van Aken S."/>
            <person name="Pai G."/>
            <person name="Militscher J."/>
            <person name="Sellers P."/>
            <person name="Gill J.E."/>
            <person name="Feldblyum T.V."/>
            <person name="Preuss D."/>
            <person name="Lin X."/>
            <person name="Nierman W.C."/>
            <person name="Salzberg S.L."/>
            <person name="White O."/>
            <person name="Venter J.C."/>
            <person name="Fraser C.M."/>
            <person name="Kaneko T."/>
            <person name="Nakamura Y."/>
            <person name="Sato S."/>
            <person name="Kato T."/>
            <person name="Asamizu E."/>
            <person name="Sasamoto S."/>
            <person name="Kimura T."/>
            <person name="Idesawa K."/>
            <person name="Kawashima K."/>
            <person name="Kishida Y."/>
            <person name="Kiyokawa C."/>
            <person name="Kohara M."/>
            <person name="Matsumoto M."/>
            <person name="Matsuno A."/>
            <person name="Muraki A."/>
            <person name="Nakayama S."/>
            <person name="Nakazaki N."/>
            <person name="Shinpo S."/>
            <person name="Takeuchi C."/>
            <person name="Wada T."/>
            <person name="Watanabe A."/>
            <person name="Yamada M."/>
            <person name="Yasuda M."/>
            <person name="Tabata S."/>
        </authorList>
    </citation>
    <scope>NUCLEOTIDE SEQUENCE [LARGE SCALE GENOMIC DNA]</scope>
    <source>
        <strain>cv. Columbia</strain>
    </source>
</reference>
<reference key="2">
    <citation type="journal article" date="2017" name="Plant J.">
        <title>Araport11: a complete reannotation of the Arabidopsis thaliana reference genome.</title>
        <authorList>
            <person name="Cheng C.Y."/>
            <person name="Krishnakumar V."/>
            <person name="Chan A.P."/>
            <person name="Thibaud-Nissen F."/>
            <person name="Schobel S."/>
            <person name="Town C.D."/>
        </authorList>
    </citation>
    <scope>GENOME REANNOTATION</scope>
    <source>
        <strain>cv. Columbia</strain>
    </source>
</reference>
<reference key="3">
    <citation type="journal article" date="2004" name="Genome Res.">
        <title>Whole genome sequence comparisons and 'full-length' cDNA sequences: a combined approach to evaluate and improve Arabidopsis genome annotation.</title>
        <authorList>
            <person name="Castelli V."/>
            <person name="Aury J.-M."/>
            <person name="Jaillon O."/>
            <person name="Wincker P."/>
            <person name="Clepet C."/>
            <person name="Menard M."/>
            <person name="Cruaud C."/>
            <person name="Quetier F."/>
            <person name="Scarpelli C."/>
            <person name="Schaechter V."/>
            <person name="Temple G."/>
            <person name="Caboche M."/>
            <person name="Weissenbach J."/>
            <person name="Salanoubat M."/>
        </authorList>
    </citation>
    <scope>NUCLEOTIDE SEQUENCE [LARGE SCALE MRNA] (ISOFORM 1)</scope>
    <source>
        <strain>cv. Columbia</strain>
    </source>
</reference>
<reference key="4">
    <citation type="journal article" date="2008" name="BMC Genomics">
        <title>Genome-wide and expression analysis of protein phosphatase 2C in rice and Arabidopsis.</title>
        <authorList>
            <person name="Xue T."/>
            <person name="Wang D."/>
            <person name="Zhang S."/>
            <person name="Ehlting J."/>
            <person name="Ni F."/>
            <person name="Jacab S."/>
            <person name="Zheng C."/>
            <person name="Zhong Y."/>
        </authorList>
    </citation>
    <scope>GENE FAMILY</scope>
    <scope>NOMENCLATURE</scope>
</reference>
<reference key="5">
    <citation type="journal article" date="2014" name="Plant Cell">
        <title>SAUR inhibition of PP2C-D phosphatases activates plasma membrane H+-ATPases to promote cell expansion in Arabidopsis.</title>
        <authorList>
            <person name="Spartz A.K."/>
            <person name="Ren H."/>
            <person name="Park M.Y."/>
            <person name="Grandt K.N."/>
            <person name="Lee S.H."/>
            <person name="Murphy A.S."/>
            <person name="Sussman M.R."/>
            <person name="Overvoorde P.J."/>
            <person name="Gray W.M."/>
        </authorList>
    </citation>
    <scope>INTERACTION WITH SAUR19</scope>
    <scope>GENE FAMILY</scope>
    <scope>NOMENCLATURE</scope>
    <source>
        <strain>cv. Columbia</strain>
    </source>
</reference>
<sequence length="379" mass="42179">MLSTLMKLLSACLWPSSSSGKSSDSTGKQDGLLWYKDFGQHLVGEFSMAVVQANNLLEDQSQVESGPLSTLDSGPYGTFIGIYDGHGGPETSRFVNDHLFQHLKRFAAEQASMSVDVIKKAYEATEEGFLGVVTKQWPTKPQIAAVGSCCLVGVICGGMLYIANVGDSRAVLGRAMKATGEVIALQLSAEHNVSIESVRQEMHSLHPDDSHIVMLKHNVWRVKGLIQISRSIGDVYLKKAEFNKEPLYTKYRIREPFKRPILSGEPTITEHEIQPQDKFLIFASDGLWEQMSNQEAVDIVQNHPRNGIARRLVKMALQEAAKKREMRYSDLKKIERGVRRHFHDDITVVIIFLDTNQVSSVKGPPLSIRGGGMTFPKKI</sequence>
<feature type="signal peptide" evidence="4">
    <location>
        <begin position="1"/>
        <end position="20"/>
    </location>
</feature>
<feature type="chain" id="PRO_0000367970" description="Probable protein phosphatase 2C 46">
    <location>
        <begin position="21"/>
        <end position="379"/>
    </location>
</feature>
<feature type="domain" description="PPM-type phosphatase" evidence="5">
    <location>
        <begin position="42"/>
        <end position="353"/>
    </location>
</feature>
<feature type="binding site" evidence="1">
    <location>
        <position position="84"/>
    </location>
    <ligand>
        <name>Mn(2+)</name>
        <dbReference type="ChEBI" id="CHEBI:29035"/>
        <label>1</label>
    </ligand>
</feature>
<feature type="binding site" evidence="1">
    <location>
        <position position="84"/>
    </location>
    <ligand>
        <name>Mn(2+)</name>
        <dbReference type="ChEBI" id="CHEBI:29035"/>
        <label>2</label>
    </ligand>
</feature>
<feature type="binding site" evidence="1">
    <location>
        <position position="85"/>
    </location>
    <ligand>
        <name>Mn(2+)</name>
        <dbReference type="ChEBI" id="CHEBI:29035"/>
        <label>1</label>
    </ligand>
</feature>
<feature type="binding site" evidence="1">
    <location>
        <position position="285"/>
    </location>
    <ligand>
        <name>Mn(2+)</name>
        <dbReference type="ChEBI" id="CHEBI:29035"/>
        <label>2</label>
    </ligand>
</feature>
<feature type="binding site" evidence="1">
    <location>
        <position position="344"/>
    </location>
    <ligand>
        <name>Mn(2+)</name>
        <dbReference type="ChEBI" id="CHEBI:29035"/>
        <label>2</label>
    </ligand>
</feature>
<feature type="modified residue" description="Phosphoserine" evidence="3">
    <location>
        <position position="73"/>
    </location>
</feature>
<feature type="splice variant" id="VSP_036772" description="In isoform 2." evidence="9">
    <location>
        <begin position="1"/>
        <end position="85"/>
    </location>
</feature>
<feature type="splice variant" id="VSP_036773" description="In isoform 2." evidence="9">
    <original>HGGPETSRFVNDHLFQHLKR</original>
    <variation>MHTRLQTNRAETKILFEFSG</variation>
    <location>
        <begin position="86"/>
        <end position="105"/>
    </location>
</feature>
<keyword id="KW-0025">Alternative splicing</keyword>
<keyword id="KW-0378">Hydrolase</keyword>
<keyword id="KW-0460">Magnesium</keyword>
<keyword id="KW-0464">Manganese</keyword>
<keyword id="KW-0479">Metal-binding</keyword>
<keyword id="KW-0597">Phosphoprotein</keyword>
<keyword id="KW-0904">Protein phosphatase</keyword>
<keyword id="KW-1185">Reference proteome</keyword>
<keyword id="KW-0732">Signal</keyword>
<protein>
    <recommendedName>
        <fullName evidence="7">Probable protein phosphatase 2C 46</fullName>
        <shortName evidence="7">AtPP2C46</shortName>
        <ecNumber evidence="3">3.1.3.16</ecNumber>
    </recommendedName>
</protein>
<evidence type="ECO:0000250" key="1">
    <source>
        <dbReference type="UniProtKB" id="P35813"/>
    </source>
</evidence>
<evidence type="ECO:0000250" key="2">
    <source>
        <dbReference type="UniProtKB" id="Q84JD5"/>
    </source>
</evidence>
<evidence type="ECO:0000250" key="3">
    <source>
        <dbReference type="UniProtKB" id="Q9LHJ9"/>
    </source>
</evidence>
<evidence type="ECO:0000255" key="4"/>
<evidence type="ECO:0000255" key="5">
    <source>
        <dbReference type="PROSITE-ProRule" id="PRU01082"/>
    </source>
</evidence>
<evidence type="ECO:0000269" key="6">
    <source>
    </source>
</evidence>
<evidence type="ECO:0000303" key="7">
    <source>
    </source>
</evidence>
<evidence type="ECO:0000303" key="8">
    <source>
    </source>
</evidence>
<evidence type="ECO:0000305" key="9"/>
<evidence type="ECO:0000312" key="10">
    <source>
        <dbReference type="Araport" id="AT3G51370"/>
    </source>
</evidence>
<evidence type="ECO:0000312" key="11">
    <source>
        <dbReference type="EMBL" id="CAB63001.1"/>
    </source>
</evidence>